<gene>
    <name evidence="1" type="primary">trpS</name>
    <name type="ordered locus">Rv3336c</name>
    <name type="ORF">MTV016.36c</name>
</gene>
<sequence length="336" mass="36272">MSTPTGSRRIFSGVQPTSDSLHLGNALGAVAQWVGLQDDHDAFFCVVDLHAITIPQDPEALRRRTLITAAQYLALGIDPGRATIFVQSQVPAHTQLAWVLGCFTGFGQASRMTQFKDKSARQGSEATTVGLFTYPVLQAADVLAYDTELVPVGEDQRQHLELARDVAQRFNSRFPGTLVVPDVLIPKMTAKIYDLQDPTSKMSKSAGTDAGLINLLDDPALSAKKIRSAVTDSERDIRYDPDVKPGVSNLLNIQSAVTGTDIDVLVDGYAGHGYGDLKKDTAEAVVEFVNPIQARVDELTADPAELEAVLAAGAQRAHDVASKTVQRVYDRLGFLL</sequence>
<comment type="function">
    <text evidence="1">Catalyzes the attachment of tryptophan to tRNA(Trp).</text>
</comment>
<comment type="catalytic activity">
    <reaction evidence="1">
        <text>tRNA(Trp) + L-tryptophan + ATP = L-tryptophyl-tRNA(Trp) + AMP + diphosphate + H(+)</text>
        <dbReference type="Rhea" id="RHEA:24080"/>
        <dbReference type="Rhea" id="RHEA-COMP:9671"/>
        <dbReference type="Rhea" id="RHEA-COMP:9705"/>
        <dbReference type="ChEBI" id="CHEBI:15378"/>
        <dbReference type="ChEBI" id="CHEBI:30616"/>
        <dbReference type="ChEBI" id="CHEBI:33019"/>
        <dbReference type="ChEBI" id="CHEBI:57912"/>
        <dbReference type="ChEBI" id="CHEBI:78442"/>
        <dbReference type="ChEBI" id="CHEBI:78535"/>
        <dbReference type="ChEBI" id="CHEBI:456215"/>
        <dbReference type="EC" id="6.1.1.2"/>
    </reaction>
</comment>
<comment type="subunit">
    <text evidence="1">Homodimer.</text>
</comment>
<comment type="subcellular location">
    <subcellularLocation>
        <location evidence="1">Cytoplasm</location>
    </subcellularLocation>
</comment>
<comment type="similarity">
    <text evidence="1">Belongs to the class-I aminoacyl-tRNA synthetase family.</text>
</comment>
<evidence type="ECO:0000255" key="1">
    <source>
        <dbReference type="HAMAP-Rule" id="MF_00140"/>
    </source>
</evidence>
<evidence type="ECO:0007829" key="2">
    <source>
        <dbReference type="PDB" id="7EL8"/>
    </source>
</evidence>
<evidence type="ECO:0007829" key="3">
    <source>
        <dbReference type="PDB" id="7ELT"/>
    </source>
</evidence>
<evidence type="ECO:0007829" key="4">
    <source>
        <dbReference type="PDB" id="7ENS"/>
    </source>
</evidence>
<keyword id="KW-0002">3D-structure</keyword>
<keyword id="KW-0030">Aminoacyl-tRNA synthetase</keyword>
<keyword id="KW-0067">ATP-binding</keyword>
<keyword id="KW-0963">Cytoplasm</keyword>
<keyword id="KW-0436">Ligase</keyword>
<keyword id="KW-0547">Nucleotide-binding</keyword>
<keyword id="KW-0648">Protein biosynthesis</keyword>
<keyword id="KW-1185">Reference proteome</keyword>
<proteinExistence type="evidence at protein level"/>
<feature type="chain" id="PRO_0000136651" description="Tryptophan--tRNA ligase">
    <location>
        <begin position="1"/>
        <end position="336"/>
    </location>
</feature>
<feature type="short sequence motif" description="'HIGH' region" evidence="1">
    <location>
        <begin position="16"/>
        <end position="25"/>
    </location>
</feature>
<feature type="short sequence motif" description="'KMSKS' region" evidence="1">
    <location>
        <begin position="201"/>
        <end position="205"/>
    </location>
</feature>
<feature type="binding site" evidence="1">
    <location>
        <begin position="15"/>
        <end position="17"/>
    </location>
    <ligand>
        <name>ATP</name>
        <dbReference type="ChEBI" id="CHEBI:30616"/>
    </ligand>
</feature>
<feature type="binding site" evidence="1">
    <location>
        <begin position="24"/>
        <end position="25"/>
    </location>
    <ligand>
        <name>ATP</name>
        <dbReference type="ChEBI" id="CHEBI:30616"/>
    </ligand>
</feature>
<feature type="binding site" evidence="1">
    <location>
        <position position="141"/>
    </location>
    <ligand>
        <name>L-tryptophan</name>
        <dbReference type="ChEBI" id="CHEBI:57912"/>
    </ligand>
</feature>
<feature type="binding site" evidence="1">
    <location>
        <begin position="153"/>
        <end position="155"/>
    </location>
    <ligand>
        <name>ATP</name>
        <dbReference type="ChEBI" id="CHEBI:30616"/>
    </ligand>
</feature>
<feature type="binding site" evidence="1">
    <location>
        <position position="192"/>
    </location>
    <ligand>
        <name>ATP</name>
        <dbReference type="ChEBI" id="CHEBI:30616"/>
    </ligand>
</feature>
<feature type="binding site" evidence="1">
    <location>
        <begin position="201"/>
        <end position="205"/>
    </location>
    <ligand>
        <name>ATP</name>
        <dbReference type="ChEBI" id="CHEBI:30616"/>
    </ligand>
</feature>
<feature type="strand" evidence="3">
    <location>
        <begin position="10"/>
        <end position="14"/>
    </location>
</feature>
<feature type="strand" evidence="3">
    <location>
        <begin position="18"/>
        <end position="20"/>
    </location>
</feature>
<feature type="helix" evidence="3">
    <location>
        <begin position="23"/>
        <end position="28"/>
    </location>
</feature>
<feature type="helix" evidence="3">
    <location>
        <begin position="30"/>
        <end position="36"/>
    </location>
</feature>
<feature type="turn" evidence="3">
    <location>
        <begin position="37"/>
        <end position="39"/>
    </location>
</feature>
<feature type="strand" evidence="3">
    <location>
        <begin position="42"/>
        <end position="46"/>
    </location>
</feature>
<feature type="helix" evidence="3">
    <location>
        <begin position="48"/>
        <end position="51"/>
    </location>
</feature>
<feature type="helix" evidence="3">
    <location>
        <begin position="58"/>
        <end position="74"/>
    </location>
</feature>
<feature type="turn" evidence="3">
    <location>
        <begin position="79"/>
        <end position="81"/>
    </location>
</feature>
<feature type="strand" evidence="3">
    <location>
        <begin position="82"/>
        <end position="86"/>
    </location>
</feature>
<feature type="helix" evidence="3">
    <location>
        <begin position="87"/>
        <end position="89"/>
    </location>
</feature>
<feature type="helix" evidence="3">
    <location>
        <begin position="92"/>
        <end position="101"/>
    </location>
</feature>
<feature type="helix" evidence="3">
    <location>
        <begin position="106"/>
        <end position="110"/>
    </location>
</feature>
<feature type="helix" evidence="3">
    <location>
        <begin position="113"/>
        <end position="122"/>
    </location>
</feature>
<feature type="turn" evidence="4">
    <location>
        <begin position="123"/>
        <end position="125"/>
    </location>
</feature>
<feature type="helix" evidence="3">
    <location>
        <begin position="129"/>
        <end position="143"/>
    </location>
</feature>
<feature type="turn" evidence="3">
    <location>
        <begin position="144"/>
        <end position="146"/>
    </location>
</feature>
<feature type="strand" evidence="3">
    <location>
        <begin position="148"/>
        <end position="151"/>
    </location>
</feature>
<feature type="helix" evidence="3">
    <location>
        <begin position="154"/>
        <end position="156"/>
    </location>
</feature>
<feature type="helix" evidence="3">
    <location>
        <begin position="157"/>
        <end position="173"/>
    </location>
</feature>
<feature type="strand" evidence="3">
    <location>
        <begin position="182"/>
        <end position="184"/>
    </location>
</feature>
<feature type="helix" evidence="2">
    <location>
        <begin position="188"/>
        <end position="190"/>
    </location>
</feature>
<feature type="strand" evidence="3">
    <location>
        <begin position="195"/>
        <end position="197"/>
    </location>
</feature>
<feature type="strand" evidence="3">
    <location>
        <begin position="206"/>
        <end position="209"/>
    </location>
</feature>
<feature type="helix" evidence="3">
    <location>
        <begin position="219"/>
        <end position="227"/>
    </location>
</feature>
<feature type="turn" evidence="3">
    <location>
        <begin position="241"/>
        <end position="243"/>
    </location>
</feature>
<feature type="helix" evidence="3">
    <location>
        <begin position="245"/>
        <end position="258"/>
    </location>
</feature>
<feature type="helix" evidence="3">
    <location>
        <begin position="262"/>
        <end position="268"/>
    </location>
</feature>
<feature type="turn" evidence="3">
    <location>
        <begin position="269"/>
        <end position="271"/>
    </location>
</feature>
<feature type="helix" evidence="3">
    <location>
        <begin position="274"/>
        <end position="301"/>
    </location>
</feature>
<feature type="helix" evidence="3">
    <location>
        <begin position="304"/>
        <end position="332"/>
    </location>
</feature>
<name>SYW_MYCTU</name>
<accession>P9WFT3</accession>
<accession>L0TDU8</accession>
<accession>O53386</accession>
<accession>P67590</accession>
<dbReference type="EC" id="6.1.1.2" evidence="1"/>
<dbReference type="EMBL" id="AL123456">
    <property type="protein sequence ID" value="CCP46157.1"/>
    <property type="molecule type" value="Genomic_DNA"/>
</dbReference>
<dbReference type="PIR" id="G70845">
    <property type="entry name" value="G70845"/>
</dbReference>
<dbReference type="RefSeq" id="NP_217853.1">
    <property type="nucleotide sequence ID" value="NC_000962.3"/>
</dbReference>
<dbReference type="RefSeq" id="WP_003417440.1">
    <property type="nucleotide sequence ID" value="NZ_NVQJ01000051.1"/>
</dbReference>
<dbReference type="PDB" id="7EL8">
    <property type="method" value="X-ray"/>
    <property type="resolution" value="2.10 A"/>
    <property type="chains" value="A=1-336"/>
</dbReference>
<dbReference type="PDB" id="7ELT">
    <property type="method" value="X-ray"/>
    <property type="resolution" value="1.90 A"/>
    <property type="chains" value="A=1-336"/>
</dbReference>
<dbReference type="PDB" id="7ENS">
    <property type="method" value="X-ray"/>
    <property type="resolution" value="2.20 A"/>
    <property type="chains" value="A=1-336"/>
</dbReference>
<dbReference type="PDB" id="7ENT">
    <property type="method" value="X-ray"/>
    <property type="resolution" value="2.40 A"/>
    <property type="chains" value="A=1-336"/>
</dbReference>
<dbReference type="PDB" id="7EV2">
    <property type="method" value="X-ray"/>
    <property type="resolution" value="2.10 A"/>
    <property type="chains" value="A=1-336"/>
</dbReference>
<dbReference type="PDB" id="7EV3">
    <property type="method" value="X-ray"/>
    <property type="resolution" value="2.70 A"/>
    <property type="chains" value="A=1-336"/>
</dbReference>
<dbReference type="PDBsum" id="7EL8"/>
<dbReference type="PDBsum" id="7ELT"/>
<dbReference type="PDBsum" id="7ENS"/>
<dbReference type="PDBsum" id="7ENT"/>
<dbReference type="PDBsum" id="7EV2"/>
<dbReference type="PDBsum" id="7EV3"/>
<dbReference type="SMR" id="P9WFT3"/>
<dbReference type="FunCoup" id="P9WFT3">
    <property type="interactions" value="303"/>
</dbReference>
<dbReference type="STRING" id="83332.Rv3336c"/>
<dbReference type="ChEMBL" id="CHEMBL4662922"/>
<dbReference type="PaxDb" id="83332-Rv3336c"/>
<dbReference type="DNASU" id="887559"/>
<dbReference type="GeneID" id="887559"/>
<dbReference type="KEGG" id="mtu:Rv3336c"/>
<dbReference type="KEGG" id="mtv:RVBD_3336c"/>
<dbReference type="TubercuList" id="Rv3336c"/>
<dbReference type="eggNOG" id="COG0180">
    <property type="taxonomic scope" value="Bacteria"/>
</dbReference>
<dbReference type="InParanoid" id="P9WFT3"/>
<dbReference type="OrthoDB" id="9801042at2"/>
<dbReference type="PhylomeDB" id="P9WFT3"/>
<dbReference type="Proteomes" id="UP000001584">
    <property type="component" value="Chromosome"/>
</dbReference>
<dbReference type="GO" id="GO:0005829">
    <property type="term" value="C:cytosol"/>
    <property type="evidence" value="ECO:0000318"/>
    <property type="project" value="GO_Central"/>
</dbReference>
<dbReference type="GO" id="GO:0005886">
    <property type="term" value="C:plasma membrane"/>
    <property type="evidence" value="ECO:0007005"/>
    <property type="project" value="MTBBASE"/>
</dbReference>
<dbReference type="GO" id="GO:0005524">
    <property type="term" value="F:ATP binding"/>
    <property type="evidence" value="ECO:0007669"/>
    <property type="project" value="UniProtKB-UniRule"/>
</dbReference>
<dbReference type="GO" id="GO:0004830">
    <property type="term" value="F:tryptophan-tRNA ligase activity"/>
    <property type="evidence" value="ECO:0000318"/>
    <property type="project" value="GO_Central"/>
</dbReference>
<dbReference type="GO" id="GO:0006436">
    <property type="term" value="P:tryptophanyl-tRNA aminoacylation"/>
    <property type="evidence" value="ECO:0000318"/>
    <property type="project" value="GO_Central"/>
</dbReference>
<dbReference type="CDD" id="cd00806">
    <property type="entry name" value="TrpRS_core"/>
    <property type="match status" value="1"/>
</dbReference>
<dbReference type="FunFam" id="1.10.240.10:FF:000002">
    <property type="entry name" value="Tryptophan--tRNA ligase"/>
    <property type="match status" value="1"/>
</dbReference>
<dbReference type="Gene3D" id="3.40.50.620">
    <property type="entry name" value="HUPs"/>
    <property type="match status" value="1"/>
</dbReference>
<dbReference type="Gene3D" id="1.10.240.10">
    <property type="entry name" value="Tyrosyl-Transfer RNA Synthetase"/>
    <property type="match status" value="1"/>
</dbReference>
<dbReference type="HAMAP" id="MF_00140_B">
    <property type="entry name" value="Trp_tRNA_synth_B"/>
    <property type="match status" value="1"/>
</dbReference>
<dbReference type="InterPro" id="IPR001412">
    <property type="entry name" value="aa-tRNA-synth_I_CS"/>
</dbReference>
<dbReference type="InterPro" id="IPR002305">
    <property type="entry name" value="aa-tRNA-synth_Ic"/>
</dbReference>
<dbReference type="InterPro" id="IPR014729">
    <property type="entry name" value="Rossmann-like_a/b/a_fold"/>
</dbReference>
<dbReference type="InterPro" id="IPR002306">
    <property type="entry name" value="Trp-tRNA-ligase"/>
</dbReference>
<dbReference type="InterPro" id="IPR024109">
    <property type="entry name" value="Trp-tRNA-ligase_bac-type"/>
</dbReference>
<dbReference type="InterPro" id="IPR050203">
    <property type="entry name" value="Trp-tRNA_synthetase"/>
</dbReference>
<dbReference type="NCBIfam" id="TIGR00233">
    <property type="entry name" value="trpS"/>
    <property type="match status" value="1"/>
</dbReference>
<dbReference type="PANTHER" id="PTHR43766">
    <property type="entry name" value="TRYPTOPHAN--TRNA LIGASE, MITOCHONDRIAL"/>
    <property type="match status" value="1"/>
</dbReference>
<dbReference type="PANTHER" id="PTHR43766:SF1">
    <property type="entry name" value="TRYPTOPHAN--TRNA LIGASE, MITOCHONDRIAL"/>
    <property type="match status" value="1"/>
</dbReference>
<dbReference type="Pfam" id="PF00579">
    <property type="entry name" value="tRNA-synt_1b"/>
    <property type="match status" value="1"/>
</dbReference>
<dbReference type="PRINTS" id="PR01039">
    <property type="entry name" value="TRNASYNTHTRP"/>
</dbReference>
<dbReference type="SUPFAM" id="SSF52374">
    <property type="entry name" value="Nucleotidylyl transferase"/>
    <property type="match status" value="1"/>
</dbReference>
<dbReference type="PROSITE" id="PS00178">
    <property type="entry name" value="AA_TRNA_LIGASE_I"/>
    <property type="match status" value="1"/>
</dbReference>
<reference key="1">
    <citation type="journal article" date="1998" name="Nature">
        <title>Deciphering the biology of Mycobacterium tuberculosis from the complete genome sequence.</title>
        <authorList>
            <person name="Cole S.T."/>
            <person name="Brosch R."/>
            <person name="Parkhill J."/>
            <person name="Garnier T."/>
            <person name="Churcher C.M."/>
            <person name="Harris D.E."/>
            <person name="Gordon S.V."/>
            <person name="Eiglmeier K."/>
            <person name="Gas S."/>
            <person name="Barry C.E. III"/>
            <person name="Tekaia F."/>
            <person name="Badcock K."/>
            <person name="Basham D."/>
            <person name="Brown D."/>
            <person name="Chillingworth T."/>
            <person name="Connor R."/>
            <person name="Davies R.M."/>
            <person name="Devlin K."/>
            <person name="Feltwell T."/>
            <person name="Gentles S."/>
            <person name="Hamlin N."/>
            <person name="Holroyd S."/>
            <person name="Hornsby T."/>
            <person name="Jagels K."/>
            <person name="Krogh A."/>
            <person name="McLean J."/>
            <person name="Moule S."/>
            <person name="Murphy L.D."/>
            <person name="Oliver S."/>
            <person name="Osborne J."/>
            <person name="Quail M.A."/>
            <person name="Rajandream M.A."/>
            <person name="Rogers J."/>
            <person name="Rutter S."/>
            <person name="Seeger K."/>
            <person name="Skelton S."/>
            <person name="Squares S."/>
            <person name="Squares R."/>
            <person name="Sulston J.E."/>
            <person name="Taylor K."/>
            <person name="Whitehead S."/>
            <person name="Barrell B.G."/>
        </authorList>
    </citation>
    <scope>NUCLEOTIDE SEQUENCE [LARGE SCALE GENOMIC DNA]</scope>
    <source>
        <strain>ATCC 25618 / H37Rv</strain>
    </source>
</reference>
<reference key="2">
    <citation type="journal article" date="2011" name="Mol. Cell. Proteomics">
        <title>Proteogenomic analysis of Mycobacterium tuberculosis by high resolution mass spectrometry.</title>
        <authorList>
            <person name="Kelkar D.S."/>
            <person name="Kumar D."/>
            <person name="Kumar P."/>
            <person name="Balakrishnan L."/>
            <person name="Muthusamy B."/>
            <person name="Yadav A.K."/>
            <person name="Shrivastava P."/>
            <person name="Marimuthu A."/>
            <person name="Anand S."/>
            <person name="Sundaram H."/>
            <person name="Kingsbury R."/>
            <person name="Harsha H.C."/>
            <person name="Nair B."/>
            <person name="Prasad T.S."/>
            <person name="Chauhan D.S."/>
            <person name="Katoch K."/>
            <person name="Katoch V.M."/>
            <person name="Kumar P."/>
            <person name="Chaerkady R."/>
            <person name="Ramachandran S."/>
            <person name="Dash D."/>
            <person name="Pandey A."/>
        </authorList>
    </citation>
    <scope>IDENTIFICATION BY MASS SPECTROMETRY [LARGE SCALE ANALYSIS]</scope>
    <source>
        <strain>ATCC 25618 / H37Rv</strain>
    </source>
</reference>
<organism>
    <name type="scientific">Mycobacterium tuberculosis (strain ATCC 25618 / H37Rv)</name>
    <dbReference type="NCBI Taxonomy" id="83332"/>
    <lineage>
        <taxon>Bacteria</taxon>
        <taxon>Bacillati</taxon>
        <taxon>Actinomycetota</taxon>
        <taxon>Actinomycetes</taxon>
        <taxon>Mycobacteriales</taxon>
        <taxon>Mycobacteriaceae</taxon>
        <taxon>Mycobacterium</taxon>
        <taxon>Mycobacterium tuberculosis complex</taxon>
    </lineage>
</organism>
<protein>
    <recommendedName>
        <fullName evidence="1">Tryptophan--tRNA ligase</fullName>
        <ecNumber evidence="1">6.1.1.2</ecNumber>
    </recommendedName>
    <alternativeName>
        <fullName evidence="1">Tryptophanyl-tRNA synthetase</fullName>
        <shortName evidence="1">TrpRS</shortName>
    </alternativeName>
</protein>